<sequence length="751" mass="85879">MSQVNTSQGPVAQGRQRRLSSLSEFNDPFSNAEVYYGPPTDPRKQKQAKPAKINRTRTMSVFDNVSPFKKTGFGKLQQTRRGSEDDTYSSSQGNRRFFIEDVDKTLNELLAAEDTDKNYQITIEDTGPKVLKVGTANSYGYKHINIRGTYMLSNLLQELTIAKSFGRHQIFLDEARINENPVNRLSRLINTQFWNSLTRRVDLNNVGEIAKDTKIDTPGAKNPRIYVPYDCPEQYEFYVQASQMHPSLKLEVEYLPKKITAEYVKSVNDTPGLLALAMEEHFNPSTGEKTLIGYPYAVPGGRFNELYGWDSYMMALGLLEANKTDVARGMVEHFIFEINHYGKILNANRSYYLCRSQPPFLTEMALVVFKKLGGRSNPDAVDLLKRAFQASIKEYKTVWTASPRLDPETGLSRYHPNGLGIPPETESDHFDTVLLPYASKHGVTLDEFKQLYNDGKIKEPKLDEFFLHDRGVRESGHDTTYRFEGVCAYLATIDLNSLLYKYEIDIADFIKEFCDDKYEDPLDHSITTSAMWKEMAKIRQEKITKYMWDDESGFFFDYNTKIKHRTSYESATTFWALWAGLATKEQAQKMVEKALPKLEMLGGLAACTERSRGPISISRPIRQWDYPFGWAPHQILAWEGLRSYGYLTVTNRLAYRWLFMMTKAFVDYNGIVVEKYDVTRGTDPHRVEAEYGNQGADFKGAATEGFGWVNASYILGLKYMNSHARRALGACIPPISFFSSLRPQERNLYGL</sequence>
<protein>
    <recommendedName>
        <fullName evidence="12">Cytosolic neutral trehalase</fullName>
        <ecNumber evidence="6 7 13 16">3.2.1.28</ecNumber>
    </recommendedName>
    <alternativeName>
        <fullName>Alpha,alpha-trehalase</fullName>
    </alternativeName>
    <alternativeName>
        <fullName>Alpha,alpha-trehalose glucohydrolase</fullName>
    </alternativeName>
</protein>
<comment type="function">
    <text evidence="6 7 8 9 13 14 16">Hydrolyzes intracellular trehalose to glucose (Probable) (PubMed:22320399, PubMed:29087344). The disaccharide trehalose serves as a storage carbohydrate that is mobilized during nutrient stress (Probable). Regulates the level of trehalose as a protectant for cell integrity during heat stress (PubMed:7730323, PubMed:7883049).</text>
</comment>
<comment type="catalytic activity">
    <reaction evidence="6 7 13 16">
        <text>alpha,alpha-trehalose + H2O = alpha-D-glucose + beta-D-glucose</text>
        <dbReference type="Rhea" id="RHEA:32675"/>
        <dbReference type="ChEBI" id="CHEBI:15377"/>
        <dbReference type="ChEBI" id="CHEBI:15903"/>
        <dbReference type="ChEBI" id="CHEBI:16551"/>
        <dbReference type="ChEBI" id="CHEBI:17925"/>
        <dbReference type="EC" id="3.2.1.28"/>
    </reaction>
</comment>
<comment type="cofactor">
    <cofactor evidence="6 7">
        <name>Ca(2+)</name>
        <dbReference type="ChEBI" id="CHEBI:29108"/>
    </cofactor>
</comment>
<comment type="activity regulation">
    <text evidence="6">Activated by calcium (PubMed:22320399). Activated by protein kinase A (PKA)-mediated phosphorylation (PubMed:22320399).</text>
</comment>
<comment type="biophysicochemical properties">
    <kinetics>
        <KM evidence="6">8 mM for trehalose (in the presence of BMH1, at pH 7.5 and 30 degrees Celsius)</KM>
        <KM evidence="6">6 mM for trehalose (in the presence of 5 mM calcium, at pH 7.5 and 30 degrees Celsius)</KM>
        <KM evidence="6">3.6 mM for trehalose (in the presence of 5 mM calcium and BMH1, at pH 7.5 and 30 degrees Celsius)</KM>
        <text>kcat is 71 sec(-1) for trehalose (in the presence of BMH1, at pH 7.5 and 30 degrees Celsius). kcat is 6.2 sec(-1) for trehalose (in the presence of 5 mM calcium, at pH 7.5 and 30 degrees Celsius). kcat is 42 sec(-1) for trehalose (in the presence of 5 mM calcium and BMH1, at pH 7.5 and 30 degrees Celsius).</text>
    </kinetics>
</comment>
<comment type="pathway">
    <text evidence="12">Carbohydrate degradation.</text>
</comment>
<comment type="subunit">
    <text evidence="6 7">Monomer (PubMed:22320399, PubMed:29087344). Interacts with BMH1 dimers; the interaction is direct and activates NTH1 (PubMed:22320399, PubMed:29087344). Interacts with BMH2 (PubMed:22320399).</text>
</comment>
<comment type="interaction">
    <interactant intactId="EBI-19509">
        <id>P32356</id>
    </interactant>
    <interactant intactId="EBI-3661">
        <id>P29311</id>
        <label>BMH1</label>
    </interactant>
    <organismsDiffer>false</organismsDiffer>
    <experiments>8</experiments>
</comment>
<comment type="interaction">
    <interactant intactId="EBI-19509">
        <id>P32356</id>
    </interactant>
    <interactant intactId="EBI-3672">
        <id>P34730</id>
        <label>BMH2</label>
    </interactant>
    <organismsDiffer>false</organismsDiffer>
    <experiments>9</experiments>
</comment>
<comment type="interaction">
    <interactant intactId="EBI-19509">
        <id>P32356</id>
    </interactant>
    <interactant intactId="EBI-38973">
        <id>Q06151</id>
        <label>DCS1</label>
    </interactant>
    <organismsDiffer>false</organismsDiffer>
    <experiments>3</experiments>
</comment>
<comment type="subcellular location">
    <subcellularLocation>
        <location evidence="4">Cytoplasm</location>
    </subcellularLocation>
</comment>
<comment type="induction">
    <text evidence="9 10">Induced during thermal stress (at protein level) (PubMed:7883049, PubMed:9276477). Induced by oxidative stress (hydrogen peroxide, sodium arsenite) (at protein level) (PubMed:9276477). Induced by copper stress (at protein level) (PubMed:9276477). Induced by protein synthesis inhibitor (cycloheximide) (PubMed:9276477).</text>
</comment>
<comment type="PTM">
    <text evidence="6">Phosphorylated by protein kinase A (PKA); phosphorylation at Ser-60 and Ser-83 is required for activation by the 14-3-3 proteins BMH1 and BMH2.</text>
</comment>
<comment type="disruption phenotype">
    <text evidence="8 9">Increases cellular trehalase level during thermal stress (PubMed:7730323). Increases sensitivity to heat shock (PubMed:7730323, PubMed:7883049). Decreases growth on the non-fermentable carbon source glycerol; simultaneous knockout of ATH1 exacerbates the effect (PubMed:7883049).</text>
</comment>
<comment type="miscellaneous">
    <text evidence="5">Present with 1840 molecules/cell in log phase SD medium.</text>
</comment>
<comment type="similarity">
    <text evidence="12">Belongs to the glycosyl hydrolase 37 family.</text>
</comment>
<reference key="1">
    <citation type="journal article" date="1993" name="J. Biol. Chem.">
        <title>Molecular analysis of the neutral trehalase gene from Saccharomyces cerevisiae.</title>
        <authorList>
            <person name="Kopp M."/>
            <person name="Mueller H."/>
            <person name="Holzer H."/>
        </authorList>
    </citation>
    <scope>NUCLEOTIDE SEQUENCE [GENOMIC DNA]</scope>
    <scope>FUNCTION</scope>
    <scope>CATALYTIC ACTIVITY</scope>
</reference>
<reference key="2">
    <citation type="journal article" date="1994" name="Gene">
        <title>Corrected sequence of the yeast neutral trehalase-encoding gene (NTH1): biological implications.</title>
        <authorList>
            <person name="Kopp M."/>
            <person name="Nwaka S."/>
            <person name="Holzer H."/>
        </authorList>
    </citation>
    <scope>SEQUENCE REVISION TO N-TERMINUS</scope>
</reference>
<reference key="3">
    <citation type="journal article" date="1997" name="Nature">
        <title>The nucleotide sequence of Saccharomyces cerevisiae chromosome IV.</title>
        <authorList>
            <person name="Jacq C."/>
            <person name="Alt-Moerbe J."/>
            <person name="Andre B."/>
            <person name="Arnold W."/>
            <person name="Bahr A."/>
            <person name="Ballesta J.P.G."/>
            <person name="Bargues M."/>
            <person name="Baron L."/>
            <person name="Becker A."/>
            <person name="Biteau N."/>
            <person name="Bloecker H."/>
            <person name="Blugeon C."/>
            <person name="Boskovic J."/>
            <person name="Brandt P."/>
            <person name="Brueckner M."/>
            <person name="Buitrago M.J."/>
            <person name="Coster F."/>
            <person name="Delaveau T."/>
            <person name="del Rey F."/>
            <person name="Dujon B."/>
            <person name="Eide L.G."/>
            <person name="Garcia-Cantalejo J.M."/>
            <person name="Goffeau A."/>
            <person name="Gomez-Peris A."/>
            <person name="Granotier C."/>
            <person name="Hanemann V."/>
            <person name="Hankeln T."/>
            <person name="Hoheisel J.D."/>
            <person name="Jaeger W."/>
            <person name="Jimenez A."/>
            <person name="Jonniaux J.-L."/>
            <person name="Kraemer C."/>
            <person name="Kuester H."/>
            <person name="Laamanen P."/>
            <person name="Legros Y."/>
            <person name="Louis E.J."/>
            <person name="Moeller-Rieker S."/>
            <person name="Monnet A."/>
            <person name="Moro M."/>
            <person name="Mueller-Auer S."/>
            <person name="Nussbaumer B."/>
            <person name="Paricio N."/>
            <person name="Paulin L."/>
            <person name="Perea J."/>
            <person name="Perez-Alonso M."/>
            <person name="Perez-Ortin J.E."/>
            <person name="Pohl T.M."/>
            <person name="Prydz H."/>
            <person name="Purnelle B."/>
            <person name="Rasmussen S.W."/>
            <person name="Remacha M.A."/>
            <person name="Revuelta J.L."/>
            <person name="Rieger M."/>
            <person name="Salom D."/>
            <person name="Saluz H.P."/>
            <person name="Saiz J.E."/>
            <person name="Saren A.-M."/>
            <person name="Schaefer M."/>
            <person name="Scharfe M."/>
            <person name="Schmidt E.R."/>
            <person name="Schneider C."/>
            <person name="Scholler P."/>
            <person name="Schwarz S."/>
            <person name="Soler-Mira A."/>
            <person name="Urrestarazu L.A."/>
            <person name="Verhasselt P."/>
            <person name="Vissers S."/>
            <person name="Voet M."/>
            <person name="Volckaert G."/>
            <person name="Wagner G."/>
            <person name="Wambutt R."/>
            <person name="Wedler E."/>
            <person name="Wedler H."/>
            <person name="Woelfl S."/>
            <person name="Harris D.E."/>
            <person name="Bowman S."/>
            <person name="Brown D."/>
            <person name="Churcher C.M."/>
            <person name="Connor R."/>
            <person name="Dedman K."/>
            <person name="Gentles S."/>
            <person name="Hamlin N."/>
            <person name="Hunt S."/>
            <person name="Jones L."/>
            <person name="McDonald S."/>
            <person name="Murphy L.D."/>
            <person name="Niblett D."/>
            <person name="Odell C."/>
            <person name="Oliver K."/>
            <person name="Rajandream M.A."/>
            <person name="Richards C."/>
            <person name="Shore L."/>
            <person name="Walsh S.V."/>
            <person name="Barrell B.G."/>
            <person name="Dietrich F.S."/>
            <person name="Mulligan J.T."/>
            <person name="Allen E."/>
            <person name="Araujo R."/>
            <person name="Aviles E."/>
            <person name="Berno A."/>
            <person name="Carpenter J."/>
            <person name="Chen E."/>
            <person name="Cherry J.M."/>
            <person name="Chung E."/>
            <person name="Duncan M."/>
            <person name="Hunicke-Smith S."/>
            <person name="Hyman R.W."/>
            <person name="Komp C."/>
            <person name="Lashkari D."/>
            <person name="Lew H."/>
            <person name="Lin D."/>
            <person name="Mosedale D."/>
            <person name="Nakahara K."/>
            <person name="Namath A."/>
            <person name="Oefner P."/>
            <person name="Oh C."/>
            <person name="Petel F.X."/>
            <person name="Roberts D."/>
            <person name="Schramm S."/>
            <person name="Schroeder M."/>
            <person name="Shogren T."/>
            <person name="Shroff N."/>
            <person name="Winant A."/>
            <person name="Yelton M.A."/>
            <person name="Botstein D."/>
            <person name="Davis R.W."/>
            <person name="Johnston M."/>
            <person name="Andrews S."/>
            <person name="Brinkman R."/>
            <person name="Cooper J."/>
            <person name="Ding H."/>
            <person name="Du Z."/>
            <person name="Favello A."/>
            <person name="Fulton L."/>
            <person name="Gattung S."/>
            <person name="Greco T."/>
            <person name="Hallsworth K."/>
            <person name="Hawkins J."/>
            <person name="Hillier L.W."/>
            <person name="Jier M."/>
            <person name="Johnson D."/>
            <person name="Johnston L."/>
            <person name="Kirsten J."/>
            <person name="Kucaba T."/>
            <person name="Langston Y."/>
            <person name="Latreille P."/>
            <person name="Le T."/>
            <person name="Mardis E."/>
            <person name="Menezes S."/>
            <person name="Miller N."/>
            <person name="Nhan M."/>
            <person name="Pauley A."/>
            <person name="Peluso D."/>
            <person name="Rifkin L."/>
            <person name="Riles L."/>
            <person name="Taich A."/>
            <person name="Trevaskis E."/>
            <person name="Vignati D."/>
            <person name="Wilcox L."/>
            <person name="Wohldman P."/>
            <person name="Vaudin M."/>
            <person name="Wilson R."/>
            <person name="Waterston R."/>
            <person name="Albermann K."/>
            <person name="Hani J."/>
            <person name="Heumann K."/>
            <person name="Kleine K."/>
            <person name="Mewes H.-W."/>
            <person name="Zollner A."/>
            <person name="Zaccaria P."/>
        </authorList>
    </citation>
    <scope>NUCLEOTIDE SEQUENCE [LARGE SCALE GENOMIC DNA]</scope>
    <source>
        <strain>ATCC 204508 / S288c</strain>
    </source>
</reference>
<reference key="4">
    <citation type="journal article" date="2014" name="G3 (Bethesda)">
        <title>The reference genome sequence of Saccharomyces cerevisiae: Then and now.</title>
        <authorList>
            <person name="Engel S.R."/>
            <person name="Dietrich F.S."/>
            <person name="Fisk D.G."/>
            <person name="Binkley G."/>
            <person name="Balakrishnan R."/>
            <person name="Costanzo M.C."/>
            <person name="Dwight S.S."/>
            <person name="Hitz B.C."/>
            <person name="Karra K."/>
            <person name="Nash R.S."/>
            <person name="Weng S."/>
            <person name="Wong E.D."/>
            <person name="Lloyd P."/>
            <person name="Skrzypek M.S."/>
            <person name="Miyasato S.R."/>
            <person name="Simison M."/>
            <person name="Cherry J.M."/>
        </authorList>
    </citation>
    <scope>GENOME REANNOTATION</scope>
    <source>
        <strain>ATCC 204508 / S288c</strain>
    </source>
</reference>
<reference key="5">
    <citation type="journal article" date="1986" name="Mol. Cell. Biol.">
        <title>Structure and sequence of the centromeric DNA of chromosome 4 in Saccharomyces cerevisiae.</title>
        <authorList>
            <person name="Mann C."/>
            <person name="Davis R.W."/>
        </authorList>
    </citation>
    <scope>NUCLEOTIDE SEQUENCE [GENOMIC DNA] OF 512-751</scope>
    <source>
        <strain>ATCC 204508 / S288c</strain>
    </source>
</reference>
<reference key="6">
    <citation type="journal article" date="1989" name="J. Biol. Chem.">
        <title>Purification and characterization of neutral trehalase from the yeast ABYS1 mutant.</title>
        <authorList>
            <person name="App H."/>
            <person name="Holzer H."/>
        </authorList>
    </citation>
    <scope>CHARACTERIZATION</scope>
</reference>
<reference key="7">
    <citation type="journal article" date="1995" name="FEBS Lett.">
        <title>Phenotypic features of trehalase mutants in Saccharomyces cerevisiae.</title>
        <authorList>
            <person name="Nwaka S."/>
            <person name="Mechler B."/>
            <person name="Destruelle M."/>
            <person name="Holzer H."/>
        </authorList>
    </citation>
    <scope>FUNCTION</scope>
    <scope>INDUCTION</scope>
    <scope>DISRUPTION PHENOTYPE</scope>
</reference>
<reference key="8">
    <citation type="journal article" date="1995" name="J. Biol. Chem.">
        <title>Expression and function of the trehalase genes NTH1 and YBR0106 in Saccharomyces cerevisiae.</title>
        <authorList>
            <person name="Nwaka S."/>
            <person name="Kopp M."/>
            <person name="Holzer H."/>
        </authorList>
    </citation>
    <scope>FUNCTION</scope>
    <scope>DISRUPTION PHENOTYPE</scope>
</reference>
<reference key="9">
    <citation type="journal article" date="1997" name="FEBS Lett.">
        <title>Neutral trehalase Nth1p of Saccharomyces cerevisiae encoded by the NTH1 gene is a multiple stress responsive protein.</title>
        <authorList>
            <person name="Zaehringer H."/>
            <person name="Burgert M."/>
            <person name="Holzer H."/>
            <person name="Nwaka S."/>
        </authorList>
    </citation>
    <scope>INDUCTION</scope>
</reference>
<reference key="10">
    <citation type="journal article" date="1999" name="Biochem. J.">
        <title>Opposite roles of trehalase activity in heat-shock recovery and heat-shock survival in Saccharomyces cerevisiae.</title>
        <authorList>
            <person name="Wera S."/>
            <person name="De Schrijver E."/>
            <person name="Geyskens I."/>
            <person name="Nwaka S."/>
            <person name="Thevelein J.M."/>
        </authorList>
    </citation>
    <scope>FUNCTION</scope>
    <scope>CATALYTIC ACTIVITY</scope>
    <scope>MUTAGENESIS OF SER-20; SER-21; THR-58; SER-60; SER-83; THR-135; THR-149; THR-260 AND SER-475</scope>
</reference>
<reference key="11">
    <citation type="journal article" date="2003" name="Nature">
        <title>Global analysis of protein localization in budding yeast.</title>
        <authorList>
            <person name="Huh W.-K."/>
            <person name="Falvo J.V."/>
            <person name="Gerke L.C."/>
            <person name="Carroll A.S."/>
            <person name="Howson R.W."/>
            <person name="Weissman J.S."/>
            <person name="O'Shea E.K."/>
        </authorList>
    </citation>
    <scope>SUBCELLULAR LOCATION [LARGE SCALE ANALYSIS]</scope>
</reference>
<reference key="12">
    <citation type="journal article" date="2003" name="Nature">
        <title>Global analysis of protein expression in yeast.</title>
        <authorList>
            <person name="Ghaemmaghami S."/>
            <person name="Huh W.-K."/>
            <person name="Bower K."/>
            <person name="Howson R.W."/>
            <person name="Belle A."/>
            <person name="Dephoure N."/>
            <person name="O'Shea E.K."/>
            <person name="Weissman J.S."/>
        </authorList>
    </citation>
    <scope>LEVEL OF PROTEIN EXPRESSION [LARGE SCALE ANALYSIS]</scope>
</reference>
<reference key="13">
    <citation type="journal article" date="2005" name="Mol. Cell. Proteomics">
        <title>Quantitative phosphoproteomics applied to the yeast pheromone signaling pathway.</title>
        <authorList>
            <person name="Gruhler A."/>
            <person name="Olsen J.V."/>
            <person name="Mohammed S."/>
            <person name="Mortensen P."/>
            <person name="Faergeman N.J."/>
            <person name="Mann M."/>
            <person name="Jensen O.N."/>
        </authorList>
    </citation>
    <scope>PHOSPHORYLATION [LARGE SCALE ANALYSIS] AT SER-60</scope>
    <scope>IDENTIFICATION BY MASS SPECTROMETRY [LARGE SCALE ANALYSIS]</scope>
    <source>
        <strain>YAL6B</strain>
    </source>
</reference>
<reference key="14">
    <citation type="journal article" date="2007" name="J. Proteome Res.">
        <title>Large-scale phosphorylation analysis of alpha-factor-arrested Saccharomyces cerevisiae.</title>
        <authorList>
            <person name="Li X."/>
            <person name="Gerber S.A."/>
            <person name="Rudner A.D."/>
            <person name="Beausoleil S.A."/>
            <person name="Haas W."/>
            <person name="Villen J."/>
            <person name="Elias J.E."/>
            <person name="Gygi S.P."/>
        </authorList>
    </citation>
    <scope>PHOSPHORYLATION [LARGE SCALE ANALYSIS] AT THR-58 AND SER-60</scope>
    <scope>IDENTIFICATION BY MASS SPECTROMETRY [LARGE SCALE ANALYSIS]</scope>
    <source>
        <strain>ADR376</strain>
    </source>
</reference>
<reference key="15">
    <citation type="journal article" date="2007" name="Proc. Natl. Acad. Sci. U.S.A.">
        <title>Analysis of phosphorylation sites on proteins from Saccharomyces cerevisiae by electron transfer dissociation (ETD) mass spectrometry.</title>
        <authorList>
            <person name="Chi A."/>
            <person name="Huttenhower C."/>
            <person name="Geer L.Y."/>
            <person name="Coon J.J."/>
            <person name="Syka J.E.P."/>
            <person name="Bai D.L."/>
            <person name="Shabanowitz J."/>
            <person name="Burke D.J."/>
            <person name="Troyanskaya O.G."/>
            <person name="Hunt D.F."/>
        </authorList>
    </citation>
    <scope>PHOSPHORYLATION [LARGE SCALE ANALYSIS] AT THR-58; SER-60; SER-66 AND SER-83</scope>
    <scope>IDENTIFICATION BY MASS SPECTROMETRY [LARGE SCALE ANALYSIS]</scope>
</reference>
<reference key="16">
    <citation type="journal article" date="2008" name="Mol. Cell. Proteomics">
        <title>A multidimensional chromatography technology for in-depth phosphoproteome analysis.</title>
        <authorList>
            <person name="Albuquerque C.P."/>
            <person name="Smolka M.B."/>
            <person name="Payne S.H."/>
            <person name="Bafna V."/>
            <person name="Eng J."/>
            <person name="Zhou H."/>
        </authorList>
    </citation>
    <scope>PHOSPHORYLATION [LARGE SCALE ANALYSIS] AT SER-66 AND SER-83</scope>
    <scope>IDENTIFICATION BY MASS SPECTROMETRY [LARGE SCALE ANALYSIS]</scope>
</reference>
<reference key="17">
    <citation type="journal article" date="2009" name="Science">
        <title>Global analysis of Cdk1 substrate phosphorylation sites provides insights into evolution.</title>
        <authorList>
            <person name="Holt L.J."/>
            <person name="Tuch B.B."/>
            <person name="Villen J."/>
            <person name="Johnson A.D."/>
            <person name="Gygi S.P."/>
            <person name="Morgan D.O."/>
        </authorList>
    </citation>
    <scope>PHOSPHORYLATION [LARGE SCALE ANALYSIS] AT SER-20; SER-21; SER-23; THR-58; SER-60; SER-66 AND SER-83</scope>
    <scope>IDENTIFICATION BY MASS SPECTROMETRY [LARGE SCALE ANALYSIS]</scope>
</reference>
<reference key="18">
    <citation type="journal article" date="2012" name="Biochem. J.">
        <title>Role of individual phosphorylation sites for the 14-3-3-protein-dependent activation of yeast neutral trehalase Nth1.</title>
        <authorList>
            <person name="Veisova D."/>
            <person name="Macakova E."/>
            <person name="Rezabkova L."/>
            <person name="Sulc M."/>
            <person name="Vacha P."/>
            <person name="Sychrova H."/>
            <person name="Obsil T."/>
            <person name="Obsilova V."/>
        </authorList>
    </citation>
    <scope>FUNCTION</scope>
    <scope>CATALYTIC ACTIVITY</scope>
    <scope>COFACTOR</scope>
    <scope>ACTIVITY REGULATION</scope>
    <scope>BIOPHYSICOCHEMICAL PROPERTIES</scope>
    <scope>INTERACTION WITH BMH1 AND BMH2</scope>
    <scope>PHOSPHORYLATION AT SER-20; SER-21; SER-60 AND SER-83</scope>
    <scope>MUTAGENESIS OF SER-20; SER-21; SER-60 AND SER-83</scope>
</reference>
<reference key="19">
    <citation type="journal article" date="2012" name="Proc. Natl. Acad. Sci. U.S.A.">
        <title>N-terminal acetylome analyses and functional insights of the N-terminal acetyltransferase NatB.</title>
        <authorList>
            <person name="Van Damme P."/>
            <person name="Lasa M."/>
            <person name="Polevoda B."/>
            <person name="Gazquez C."/>
            <person name="Elosegui-Artola A."/>
            <person name="Kim D.S."/>
            <person name="De Juan-Pardo E."/>
            <person name="Demeyer K."/>
            <person name="Hole K."/>
            <person name="Larrea E."/>
            <person name="Timmerman E."/>
            <person name="Prieto J."/>
            <person name="Arnesen T."/>
            <person name="Sherman F."/>
            <person name="Gevaert K."/>
            <person name="Aldabe R."/>
        </authorList>
    </citation>
    <scope>ACETYLATION [LARGE SCALE ANALYSIS] AT SER-2</scope>
    <scope>CLEAVAGE OF INITIATOR METHIONINE [LARGE SCALE ANALYSIS]</scope>
    <scope>IDENTIFICATION BY MASS SPECTROMETRY [LARGE SCALE ANALYSIS]</scope>
</reference>
<reference evidence="17 18 19 20" key="20">
    <citation type="journal article" date="2017" name="Proc. Natl. Acad. Sci. U.S.A.">
        <title>Molecular basis of the 14-3-3 protein-dependent activation of yeast neutral trehalase Nth1.</title>
        <authorList>
            <person name="Alblova M."/>
            <person name="Smidova A."/>
            <person name="Docekal V."/>
            <person name="Vesely J."/>
            <person name="Herman P."/>
            <person name="Obsilova V."/>
            <person name="Obsil T."/>
        </authorList>
    </citation>
    <scope>X-RAY CRYSTALLOGRAPHY (2.29 ANGSTROMS) IN COMPLEXES WITH CALCIUM; BMH1 AND SUBSTRATE</scope>
    <scope>FUNCTION</scope>
    <scope>CATALYTIC ACTIVITY</scope>
    <scope>COFACTOR</scope>
    <scope>SUBUNIT</scope>
    <scope>ACTIVE SITE</scope>
    <scope>MUTAGENESIS OF GLN-120; ASP-478; GLU-674; ARG-686; GLU-690 AND TYR-691</scope>
</reference>
<keyword id="KW-0002">3D-structure</keyword>
<keyword id="KW-0007">Acetylation</keyword>
<keyword id="KW-0106">Calcium</keyword>
<keyword id="KW-0963">Cytoplasm</keyword>
<keyword id="KW-0326">Glycosidase</keyword>
<keyword id="KW-0378">Hydrolase</keyword>
<keyword id="KW-0479">Metal-binding</keyword>
<keyword id="KW-0597">Phosphoprotein</keyword>
<keyword id="KW-1185">Reference proteome</keyword>
<feature type="initiator methionine" description="Removed" evidence="26">
    <location>
        <position position="1"/>
    </location>
</feature>
<feature type="chain" id="PRO_0000173798" description="Cytosolic neutral trehalase">
    <location>
        <begin position="2"/>
        <end position="751"/>
    </location>
</feature>
<feature type="region of interest" description="Disordered" evidence="2">
    <location>
        <begin position="1"/>
        <end position="59"/>
    </location>
</feature>
<feature type="region of interest" description="Disordered" evidence="2">
    <location>
        <begin position="73"/>
        <end position="92"/>
    </location>
</feature>
<feature type="compositionally biased region" description="Polar residues" evidence="2">
    <location>
        <begin position="1"/>
        <end position="10"/>
    </location>
</feature>
<feature type="compositionally biased region" description="Basic residues" evidence="2">
    <location>
        <begin position="45"/>
        <end position="55"/>
    </location>
</feature>
<feature type="active site" description="Proton donor/acceptor" evidence="15 18">
    <location>
        <position position="478"/>
    </location>
</feature>
<feature type="active site" description="Proton donor/acceptor" evidence="15 18">
    <location>
        <position position="674"/>
    </location>
</feature>
<feature type="binding site" evidence="7 19">
    <location>
        <position position="114"/>
    </location>
    <ligand>
        <name>Ca(2+)</name>
        <dbReference type="ChEBI" id="CHEBI:29108"/>
    </ligand>
</feature>
<feature type="binding site" evidence="7 19">
    <location>
        <position position="116"/>
    </location>
    <ligand>
        <name>Ca(2+)</name>
        <dbReference type="ChEBI" id="CHEBI:29108"/>
    </ligand>
</feature>
<feature type="binding site" evidence="7 19">
    <location>
        <position position="118"/>
    </location>
    <ligand>
        <name>Ca(2+)</name>
        <dbReference type="ChEBI" id="CHEBI:29108"/>
    </ligand>
</feature>
<feature type="binding site" evidence="7 19">
    <location>
        <position position="120"/>
    </location>
    <ligand>
        <name>Ca(2+)</name>
        <dbReference type="ChEBI" id="CHEBI:29108"/>
    </ligand>
</feature>
<feature type="binding site" evidence="7 19">
    <location>
        <position position="125"/>
    </location>
    <ligand>
        <name>Ca(2+)</name>
        <dbReference type="ChEBI" id="CHEBI:29108"/>
    </ligand>
</feature>
<feature type="binding site" evidence="1">
    <location>
        <position position="302"/>
    </location>
    <ligand>
        <name>substrate</name>
    </ligand>
</feature>
<feature type="binding site" evidence="7 18 19">
    <location>
        <begin position="309"/>
        <end position="310"/>
    </location>
    <ligand>
        <name>substrate</name>
    </ligand>
</feature>
<feature type="binding site" evidence="7 18 19">
    <location>
        <position position="346"/>
    </location>
    <ligand>
        <name>substrate</name>
    </ligand>
</feature>
<feature type="binding site" evidence="7 18 19">
    <location>
        <begin position="355"/>
        <end position="357"/>
    </location>
    <ligand>
        <name>substrate</name>
    </ligand>
</feature>
<feature type="binding site" evidence="7 18 19">
    <location>
        <position position="424"/>
    </location>
    <ligand>
        <name>substrate</name>
    </ligand>
</feature>
<feature type="binding site" evidence="7 18 19">
    <location>
        <position position="473"/>
    </location>
    <ligand>
        <name>substrate</name>
    </ligand>
</feature>
<feature type="binding site" evidence="7 18 19">
    <location>
        <position position="476"/>
    </location>
    <ligand>
        <name>substrate</name>
    </ligand>
</feature>
<feature type="site" description="BMH1 binding" evidence="7 19">
    <location>
        <position position="55"/>
    </location>
</feature>
<feature type="modified residue" description="N-acetylserine" evidence="26">
    <location>
        <position position="2"/>
    </location>
</feature>
<feature type="modified residue" description="Phosphoserine; by PKA" evidence="6 25">
    <location>
        <position position="20"/>
    </location>
</feature>
<feature type="modified residue" description="Phosphoserine; by PKA" evidence="6 25">
    <location>
        <position position="21"/>
    </location>
</feature>
<feature type="modified residue" description="Phosphoserine" evidence="25">
    <location>
        <position position="23"/>
    </location>
</feature>
<feature type="modified residue" description="Phosphothreonine" evidence="22 23 25">
    <location>
        <position position="58"/>
    </location>
</feature>
<feature type="modified residue" description="Phosphoserine; by PKA" evidence="6 21 22 23 25">
    <location>
        <position position="60"/>
    </location>
</feature>
<feature type="modified residue" description="Phosphoserine" evidence="22 24 25">
    <location>
        <position position="66"/>
    </location>
</feature>
<feature type="modified residue" description="Phosphoserine; by PKA" evidence="6 22 24 25">
    <location>
        <position position="83"/>
    </location>
</feature>
<feature type="mutagenesis site" description="Abolishes activity; when associated with A-21; A-58; A-60; A-83; A-135; A-149; A-260 and A-475. Abolishes activation by BMH1 and BMH2; when associated with A-21; A-60 and A-83." evidence="3 6">
    <original>S</original>
    <variation>A</variation>
    <location>
        <position position="20"/>
    </location>
</feature>
<feature type="mutagenesis site" description="Abolishes activity; when associated with A-20; A-58; A-60; A-83; A-135; A-149; A-260 and A-475. Abolishes activation by BMH1 and BMH2; when associated with A-20; A-60 and A-83." evidence="3 6">
    <original>S</original>
    <variation>A</variation>
    <location>
        <position position="21"/>
    </location>
</feature>
<feature type="mutagenesis site" description="Abolishes activity; when associated with A-20; A-21; A-60; A-83; A-135; A-149; A-260 and A-475." evidence="3">
    <original>T</original>
    <variation>A</variation>
    <location>
        <position position="58"/>
    </location>
</feature>
<feature type="mutagenesis site" description="Abolishes activity; when associated with A-20; A-21; A-58; A-83; A-135; A-149; A-260 and A-475. Abolishes activation by BMH1 and BMH2; when associated with A-20; A-21 and A-83." evidence="3 6">
    <original>S</original>
    <variation>A</variation>
    <location>
        <position position="60"/>
    </location>
</feature>
<feature type="mutagenesis site" description="Abolishes activity; when associated with A-20; A-21; A-58; A-60; A-135; A-149; A-260 and A-475. Abolishes activation by BMH1 and BMH2; when associated with A-20; A-21 and A-60." evidence="3 6">
    <original>S</original>
    <variation>A</variation>
    <location>
        <position position="83"/>
    </location>
</feature>
<feature type="mutagenesis site" description="Decreases catalytic activity." evidence="7">
    <original>Q</original>
    <variation>A</variation>
    <location>
        <position position="120"/>
    </location>
</feature>
<feature type="mutagenesis site" description="Abolishes activity; when associated with A-20; A-21; A-58; A-60; A-83; A-149; A-260 and A-475." evidence="3">
    <original>T</original>
    <variation>A</variation>
    <location>
        <position position="135"/>
    </location>
</feature>
<feature type="mutagenesis site" description="Abolishes activity; when associated with A-20; A-21; A-58; A-60; A-83; A-135; A-260 and A-475." evidence="3">
    <original>T</original>
    <variation>A</variation>
    <location>
        <position position="149"/>
    </location>
</feature>
<feature type="mutagenesis site" description="Abolishes activity; when associated with A-20; A-21; A-58; A-60; A-83; A-135; A-149 and A-475." evidence="3">
    <original>T</original>
    <variation>A</variation>
    <location>
        <position position="260"/>
    </location>
</feature>
<feature type="mutagenesis site" description="Abolishes activity; when associated with A-20; A-21; A-58; A-60; A-83; A-135; A-149 and A-260." evidence="3">
    <original>S</original>
    <variation>A</variation>
    <location>
        <position position="475"/>
    </location>
</feature>
<feature type="mutagenesis site" description="Abolishes catalytic activity." evidence="7">
    <original>D</original>
    <variation>A</variation>
    <location>
        <position position="478"/>
    </location>
</feature>
<feature type="mutagenesis site" description="Abolishes catalytic activity." evidence="7">
    <original>E</original>
    <variation>A</variation>
    <location>
        <position position="674"/>
    </location>
</feature>
<feature type="mutagenesis site" description="Decreases catalytic activity." evidence="7">
    <original>R</original>
    <variation>A</variation>
    <location>
        <position position="686"/>
    </location>
</feature>
<feature type="mutagenesis site" description="Severely decreases catalytic activity." evidence="7">
    <original>E</original>
    <variation>A</variation>
    <location>
        <position position="690"/>
    </location>
</feature>
<feature type="mutagenesis site" description="Abolishes catalytic activity." evidence="7">
    <original>Y</original>
    <variation>A</variation>
    <location>
        <position position="691"/>
    </location>
</feature>
<feature type="sequence conflict" description="In Ref. 5; AAA66896." evidence="12" ref="5">
    <original>CD</original>
    <variation>NN</variation>
    <location>
        <begin position="514"/>
        <end position="515"/>
    </location>
</feature>
<feature type="sequence conflict" description="In Ref. 1; CAA46718 and 5; AAA66896." evidence="12" ref="1 5">
    <original>S</original>
    <variation>R</variation>
    <location>
        <position position="712"/>
    </location>
</feature>
<feature type="sequence conflict" description="In Ref. 1; CAA46718 and 5; AAA66896." evidence="12" ref="1 5">
    <original>HA</original>
    <variation>YE</variation>
    <location>
        <begin position="723"/>
        <end position="724"/>
    </location>
</feature>
<feature type="sequence conflict" description="In Ref. 1; CAA46718 and 5; AAA66896." evidence="12" ref="1 5">
    <original>AL</original>
    <variation>EI</variation>
    <location>
        <begin position="727"/>
        <end position="728"/>
    </location>
</feature>
<feature type="helix" evidence="28">
    <location>
        <begin position="32"/>
        <end position="35"/>
    </location>
</feature>
<feature type="turn" evidence="28">
    <location>
        <begin position="55"/>
        <end position="57"/>
    </location>
</feature>
<feature type="turn" evidence="28">
    <location>
        <begin position="67"/>
        <end position="73"/>
    </location>
</feature>
<feature type="helix" evidence="28">
    <location>
        <begin position="87"/>
        <end position="92"/>
    </location>
</feature>
<feature type="strand" evidence="28">
    <location>
        <begin position="96"/>
        <end position="100"/>
    </location>
</feature>
<feature type="helix" evidence="28">
    <location>
        <begin position="102"/>
        <end position="113"/>
    </location>
</feature>
<feature type="strand" evidence="28">
    <location>
        <begin position="129"/>
        <end position="135"/>
    </location>
</feature>
<feature type="turn" evidence="28">
    <location>
        <begin position="136"/>
        <end position="140"/>
    </location>
</feature>
<feature type="strand" evidence="28">
    <location>
        <begin position="141"/>
        <end position="148"/>
    </location>
</feature>
<feature type="helix" evidence="28">
    <location>
        <begin position="149"/>
        <end position="164"/>
    </location>
</feature>
<feature type="strand" evidence="28">
    <location>
        <begin position="168"/>
        <end position="173"/>
    </location>
</feature>
<feature type="helix" evidence="28">
    <location>
        <begin position="174"/>
        <end position="176"/>
    </location>
</feature>
<feature type="helix" evidence="28">
    <location>
        <begin position="181"/>
        <end position="191"/>
    </location>
</feature>
<feature type="helix" evidence="28">
    <location>
        <begin position="193"/>
        <end position="197"/>
    </location>
</feature>
<feature type="turn" evidence="28">
    <location>
        <begin position="203"/>
        <end position="205"/>
    </location>
</feature>
<feature type="helix" evidence="28">
    <location>
        <begin position="206"/>
        <end position="210"/>
    </location>
</feature>
<feature type="helix" evidence="28">
    <location>
        <begin position="218"/>
        <end position="220"/>
    </location>
</feature>
<feature type="strand" evidence="28">
    <location>
        <begin position="224"/>
        <end position="227"/>
    </location>
</feature>
<feature type="helix" evidence="28">
    <location>
        <begin position="232"/>
        <end position="244"/>
    </location>
</feature>
<feature type="helix" evidence="28">
    <location>
        <begin position="246"/>
        <end position="248"/>
    </location>
</feature>
<feature type="strand" evidence="28">
    <location>
        <begin position="251"/>
        <end position="254"/>
    </location>
</feature>
<feature type="helix" evidence="28">
    <location>
        <begin position="261"/>
        <end position="266"/>
    </location>
</feature>
<feature type="turn" evidence="28">
    <location>
        <begin position="267"/>
        <end position="269"/>
    </location>
</feature>
<feature type="strand" evidence="28">
    <location>
        <begin position="278"/>
        <end position="282"/>
    </location>
</feature>
<feature type="turn" evidence="28">
    <location>
        <begin position="284"/>
        <end position="286"/>
    </location>
</feature>
<feature type="strand" evidence="28">
    <location>
        <begin position="289"/>
        <end position="293"/>
    </location>
</feature>
<feature type="helix" evidence="28">
    <location>
        <begin position="309"/>
        <end position="320"/>
    </location>
</feature>
<feature type="helix" evidence="28">
    <location>
        <begin position="324"/>
        <end position="341"/>
    </location>
</feature>
<feature type="strand" evidence="28">
    <location>
        <begin position="346"/>
        <end position="349"/>
    </location>
</feature>
<feature type="helix" evidence="28">
    <location>
        <begin position="350"/>
        <end position="352"/>
    </location>
</feature>
<feature type="helix" evidence="28">
    <location>
        <begin position="361"/>
        <end position="371"/>
    </location>
</feature>
<feature type="helix" evidence="28">
    <location>
        <begin position="374"/>
        <end position="376"/>
    </location>
</feature>
<feature type="helix" evidence="28">
    <location>
        <begin position="378"/>
        <end position="397"/>
    </location>
</feature>
<feature type="turn" evidence="28">
    <location>
        <begin position="398"/>
        <end position="400"/>
    </location>
</feature>
<feature type="turn" evidence="28">
    <location>
        <begin position="402"/>
        <end position="404"/>
    </location>
</feature>
<feature type="turn" evidence="28">
    <location>
        <begin position="407"/>
        <end position="409"/>
    </location>
</feature>
<feature type="turn" evidence="28">
    <location>
        <begin position="427"/>
        <end position="430"/>
    </location>
</feature>
<feature type="helix" evidence="28">
    <location>
        <begin position="431"/>
        <end position="433"/>
    </location>
</feature>
<feature type="helix" evidence="28">
    <location>
        <begin position="449"/>
        <end position="453"/>
    </location>
</feature>
<feature type="helix" evidence="28">
    <location>
        <begin position="460"/>
        <end position="474"/>
    </location>
</feature>
<feature type="turn" evidence="28">
    <location>
        <begin position="481"/>
        <end position="486"/>
    </location>
</feature>
<feature type="helix" evidence="28">
    <location>
        <begin position="487"/>
        <end position="489"/>
    </location>
</feature>
<feature type="helix" evidence="28">
    <location>
        <begin position="493"/>
        <end position="513"/>
    </location>
</feature>
<feature type="turn" evidence="27">
    <location>
        <begin position="514"/>
        <end position="516"/>
    </location>
</feature>
<feature type="turn" evidence="28">
    <location>
        <begin position="521"/>
        <end position="523"/>
    </location>
</feature>
<feature type="helix" evidence="28">
    <location>
        <begin position="529"/>
        <end position="547"/>
    </location>
</feature>
<feature type="turn" evidence="28">
    <location>
        <begin position="550"/>
        <end position="553"/>
    </location>
</feature>
<feature type="turn" evidence="28">
    <location>
        <begin position="560"/>
        <end position="563"/>
    </location>
</feature>
<feature type="helix" evidence="28">
    <location>
        <begin position="571"/>
        <end position="574"/>
    </location>
</feature>
<feature type="helix" evidence="28">
    <location>
        <begin position="575"/>
        <end position="578"/>
    </location>
</feature>
<feature type="helix" evidence="28">
    <location>
        <begin position="584"/>
        <end position="593"/>
    </location>
</feature>
<feature type="helix" evidence="28">
    <location>
        <begin position="595"/>
        <end position="598"/>
    </location>
</feature>
<feature type="helix" evidence="28">
    <location>
        <begin position="609"/>
        <end position="612"/>
    </location>
</feature>
<feature type="strand" evidence="28">
    <location>
        <begin position="617"/>
        <end position="619"/>
    </location>
</feature>
<feature type="strand" evidence="27">
    <location>
        <begin position="623"/>
        <end position="625"/>
    </location>
</feature>
<feature type="helix" evidence="28">
    <location>
        <begin position="631"/>
        <end position="643"/>
    </location>
</feature>
<feature type="helix" evidence="28">
    <location>
        <begin position="647"/>
        <end position="667"/>
    </location>
</feature>
<feature type="turn" evidence="28">
    <location>
        <begin position="668"/>
        <end position="670"/>
    </location>
</feature>
<feature type="strand" evidence="28">
    <location>
        <begin position="674"/>
        <end position="677"/>
    </location>
</feature>
<feature type="strand" evidence="28">
    <location>
        <begin position="699"/>
        <end position="701"/>
    </location>
</feature>
<feature type="helix" evidence="28">
    <location>
        <begin position="707"/>
        <end position="717"/>
    </location>
</feature>
<feature type="helix" evidence="28">
    <location>
        <begin position="722"/>
        <end position="729"/>
    </location>
</feature>
<feature type="helix" evidence="28">
    <location>
        <begin position="734"/>
        <end position="740"/>
    </location>
</feature>
<feature type="helix" evidence="28">
    <location>
        <begin position="745"/>
        <end position="749"/>
    </location>
</feature>
<accession>P32356</accession>
<accession>D6VRY8</accession>
<accession>E9P9U7</accession>
<proteinExistence type="evidence at protein level"/>
<name>TREA_YEAST</name>
<evidence type="ECO:0000250" key="1">
    <source>
        <dbReference type="UniProtKB" id="P13482"/>
    </source>
</evidence>
<evidence type="ECO:0000256" key="2">
    <source>
        <dbReference type="SAM" id="MobiDB-lite"/>
    </source>
</evidence>
<evidence type="ECO:0000269" key="3">
    <source>
    </source>
</evidence>
<evidence type="ECO:0000269" key="4">
    <source>
    </source>
</evidence>
<evidence type="ECO:0000269" key="5">
    <source>
    </source>
</evidence>
<evidence type="ECO:0000269" key="6">
    <source>
    </source>
</evidence>
<evidence type="ECO:0000269" key="7">
    <source>
    </source>
</evidence>
<evidence type="ECO:0000269" key="8">
    <source>
    </source>
</evidence>
<evidence type="ECO:0000269" key="9">
    <source>
    </source>
</evidence>
<evidence type="ECO:0000269" key="10">
    <source>
    </source>
</evidence>
<evidence type="ECO:0000303" key="11">
    <source>
    </source>
</evidence>
<evidence type="ECO:0000305" key="12"/>
<evidence type="ECO:0000305" key="13">
    <source>
    </source>
</evidence>
<evidence type="ECO:0000305" key="14">
    <source>
    </source>
</evidence>
<evidence type="ECO:0000305" key="15">
    <source>
    </source>
</evidence>
<evidence type="ECO:0000305" key="16">
    <source>
    </source>
</evidence>
<evidence type="ECO:0007744" key="17">
    <source>
        <dbReference type="PDB" id="5JTA"/>
    </source>
</evidence>
<evidence type="ECO:0007744" key="18">
    <source>
        <dbReference type="PDB" id="5M4A"/>
    </source>
</evidence>
<evidence type="ECO:0007744" key="19">
    <source>
        <dbReference type="PDB" id="5N6N"/>
    </source>
</evidence>
<evidence type="ECO:0007744" key="20">
    <source>
        <dbReference type="PDB" id="5NIS"/>
    </source>
</evidence>
<evidence type="ECO:0007744" key="21">
    <source>
    </source>
</evidence>
<evidence type="ECO:0007744" key="22">
    <source>
    </source>
</evidence>
<evidence type="ECO:0007744" key="23">
    <source>
    </source>
</evidence>
<evidence type="ECO:0007744" key="24">
    <source>
    </source>
</evidence>
<evidence type="ECO:0007744" key="25">
    <source>
    </source>
</evidence>
<evidence type="ECO:0007744" key="26">
    <source>
    </source>
</evidence>
<evidence type="ECO:0007829" key="27">
    <source>
        <dbReference type="PDB" id="5M4A"/>
    </source>
</evidence>
<evidence type="ECO:0007829" key="28">
    <source>
        <dbReference type="PDB" id="5N6N"/>
    </source>
</evidence>
<organism>
    <name type="scientific">Saccharomyces cerevisiae (strain ATCC 204508 / S288c)</name>
    <name type="common">Baker's yeast</name>
    <dbReference type="NCBI Taxonomy" id="559292"/>
    <lineage>
        <taxon>Eukaryota</taxon>
        <taxon>Fungi</taxon>
        <taxon>Dikarya</taxon>
        <taxon>Ascomycota</taxon>
        <taxon>Saccharomycotina</taxon>
        <taxon>Saccharomycetes</taxon>
        <taxon>Saccharomycetales</taxon>
        <taxon>Saccharomycetaceae</taxon>
        <taxon>Saccharomyces</taxon>
    </lineage>
</organism>
<gene>
    <name evidence="11" type="primary">NTH1</name>
    <name type="synonym">NTH</name>
    <name type="ordered locus">YDR001C</name>
    <name type="ORF">YD8119.07C</name>
</gene>
<dbReference type="EC" id="3.2.1.28" evidence="6 7 13 16"/>
<dbReference type="EMBL" id="X65925">
    <property type="protein sequence ID" value="CAA46718.1"/>
    <property type="molecule type" value="Genomic_DNA"/>
</dbReference>
<dbReference type="EMBL" id="Z48008">
    <property type="protein sequence ID" value="CAA88061.1"/>
    <property type="molecule type" value="Genomic_DNA"/>
</dbReference>
<dbReference type="EMBL" id="M13000">
    <property type="protein sequence ID" value="AAA66896.1"/>
    <property type="molecule type" value="Genomic_DNA"/>
</dbReference>
<dbReference type="EMBL" id="BK006938">
    <property type="protein sequence ID" value="DAA11848.1"/>
    <property type="molecule type" value="Genomic_DNA"/>
</dbReference>
<dbReference type="PIR" id="S50982">
    <property type="entry name" value="S50982"/>
</dbReference>
<dbReference type="RefSeq" id="NP_010284.1">
    <property type="nucleotide sequence ID" value="NM_001180309.1"/>
</dbReference>
<dbReference type="PDB" id="5JTA">
    <property type="method" value="X-ray"/>
    <property type="resolution" value="2.72 A"/>
    <property type="chains" value="A=1-751"/>
</dbReference>
<dbReference type="PDB" id="5M4A">
    <property type="method" value="X-ray"/>
    <property type="resolution" value="2.90 A"/>
    <property type="chains" value="A=153-751"/>
</dbReference>
<dbReference type="PDB" id="5N6N">
    <property type="method" value="X-ray"/>
    <property type="resolution" value="2.29 A"/>
    <property type="chains" value="C=1-751"/>
</dbReference>
<dbReference type="PDB" id="5NIS">
    <property type="method" value="X-ray"/>
    <property type="resolution" value="3.15 A"/>
    <property type="chains" value="A=100-751"/>
</dbReference>
<dbReference type="PDBsum" id="5JTA"/>
<dbReference type="PDBsum" id="5M4A"/>
<dbReference type="PDBsum" id="5N6N"/>
<dbReference type="PDBsum" id="5NIS"/>
<dbReference type="SMR" id="P32356"/>
<dbReference type="BioGRID" id="32054">
    <property type="interactions" value="117"/>
</dbReference>
<dbReference type="DIP" id="DIP-1479N"/>
<dbReference type="FunCoup" id="P32356">
    <property type="interactions" value="406"/>
</dbReference>
<dbReference type="IntAct" id="P32356">
    <property type="interactions" value="26"/>
</dbReference>
<dbReference type="MINT" id="P32356"/>
<dbReference type="STRING" id="4932.YDR001C"/>
<dbReference type="CAZy" id="GH37">
    <property type="family name" value="Glycoside Hydrolase Family 37"/>
</dbReference>
<dbReference type="GlyGen" id="P32356">
    <property type="glycosylation" value="1 site, 1 O-linked glycan (1 site)"/>
</dbReference>
<dbReference type="iPTMnet" id="P32356"/>
<dbReference type="PaxDb" id="4932-YDR001C"/>
<dbReference type="PeptideAtlas" id="P32356"/>
<dbReference type="EnsemblFungi" id="YDR001C_mRNA">
    <property type="protein sequence ID" value="YDR001C"/>
    <property type="gene ID" value="YDR001C"/>
</dbReference>
<dbReference type="GeneID" id="851564"/>
<dbReference type="KEGG" id="sce:YDR001C"/>
<dbReference type="AGR" id="SGD:S000002408"/>
<dbReference type="SGD" id="S000002408">
    <property type="gene designation" value="NTH1"/>
</dbReference>
<dbReference type="VEuPathDB" id="FungiDB:YDR001C"/>
<dbReference type="eggNOG" id="KOG0602">
    <property type="taxonomic scope" value="Eukaryota"/>
</dbReference>
<dbReference type="GeneTree" id="ENSGT00390000006949"/>
<dbReference type="HOGENOM" id="CLU_006451_1_1_1"/>
<dbReference type="InParanoid" id="P32356"/>
<dbReference type="OMA" id="WLFMMTK"/>
<dbReference type="OrthoDB" id="3542292at2759"/>
<dbReference type="BioCyc" id="MetaCyc:YDR001C-MONOMER"/>
<dbReference type="BioCyc" id="YEAST:YDR001C-MONOMER"/>
<dbReference type="BRENDA" id="3.2.1.28">
    <property type="organism ID" value="984"/>
</dbReference>
<dbReference type="BioGRID-ORCS" id="851564">
    <property type="hits" value="1 hit in 10 CRISPR screens"/>
</dbReference>
<dbReference type="PRO" id="PR:P32356"/>
<dbReference type="Proteomes" id="UP000002311">
    <property type="component" value="Chromosome IV"/>
</dbReference>
<dbReference type="RNAct" id="P32356">
    <property type="molecule type" value="protein"/>
</dbReference>
<dbReference type="GO" id="GO:0005737">
    <property type="term" value="C:cytoplasm"/>
    <property type="evidence" value="ECO:0007005"/>
    <property type="project" value="SGD"/>
</dbReference>
<dbReference type="GO" id="GO:0004555">
    <property type="term" value="F:alpha,alpha-trehalase activity"/>
    <property type="evidence" value="ECO:0000314"/>
    <property type="project" value="UniProtKB"/>
</dbReference>
<dbReference type="GO" id="GO:0005509">
    <property type="term" value="F:calcium ion binding"/>
    <property type="evidence" value="ECO:0007669"/>
    <property type="project" value="InterPro"/>
</dbReference>
<dbReference type="GO" id="GO:0015927">
    <property type="term" value="F:trehalase activity"/>
    <property type="evidence" value="ECO:0000314"/>
    <property type="project" value="UniProtKB"/>
</dbReference>
<dbReference type="GO" id="GO:0071465">
    <property type="term" value="P:cellular response to desiccation"/>
    <property type="evidence" value="ECO:0000315"/>
    <property type="project" value="SGD"/>
</dbReference>
<dbReference type="GO" id="GO:0005993">
    <property type="term" value="P:trehalose catabolic process"/>
    <property type="evidence" value="ECO:0000314"/>
    <property type="project" value="UniProtKB"/>
</dbReference>
<dbReference type="FunFam" id="1.50.10.10:FF:000026">
    <property type="entry name" value="Trehalase"/>
    <property type="match status" value="1"/>
</dbReference>
<dbReference type="Gene3D" id="1.50.10.10">
    <property type="match status" value="1"/>
</dbReference>
<dbReference type="InterPro" id="IPR008928">
    <property type="entry name" value="6-hairpin_glycosidase_sf"/>
</dbReference>
<dbReference type="InterPro" id="IPR012341">
    <property type="entry name" value="6hp_glycosidase-like_sf"/>
</dbReference>
<dbReference type="InterPro" id="IPR001661">
    <property type="entry name" value="Glyco_hydro_37"/>
</dbReference>
<dbReference type="InterPro" id="IPR018232">
    <property type="entry name" value="Glyco_hydro_37_CS"/>
</dbReference>
<dbReference type="InterPro" id="IPR011120">
    <property type="entry name" value="Trehalase_Ca-bd"/>
</dbReference>
<dbReference type="PANTHER" id="PTHR23403:SF6">
    <property type="entry name" value="CYTOSOLIC NEUTRAL TREHALASE-RELATED"/>
    <property type="match status" value="1"/>
</dbReference>
<dbReference type="PANTHER" id="PTHR23403">
    <property type="entry name" value="TREHALASE"/>
    <property type="match status" value="1"/>
</dbReference>
<dbReference type="Pfam" id="PF01204">
    <property type="entry name" value="Trehalase"/>
    <property type="match status" value="1"/>
</dbReference>
<dbReference type="Pfam" id="PF07492">
    <property type="entry name" value="Trehalase_Ca-bi"/>
    <property type="match status" value="1"/>
</dbReference>
<dbReference type="PRINTS" id="PR00744">
    <property type="entry name" value="GLHYDRLASE37"/>
</dbReference>
<dbReference type="SUPFAM" id="SSF48208">
    <property type="entry name" value="Six-hairpin glycosidases"/>
    <property type="match status" value="1"/>
</dbReference>
<dbReference type="PROSITE" id="PS00927">
    <property type="entry name" value="TREHALASE_1"/>
    <property type="match status" value="1"/>
</dbReference>
<dbReference type="PROSITE" id="PS00928">
    <property type="entry name" value="TREHALASE_2"/>
    <property type="match status" value="1"/>
</dbReference>